<sequence length="131" mass="15036">MYNFDYSKLPIKNIQKIFPIAGGYVNLSFSVDASNKKYFLKLQPNTKSNFFDYELSSLKELTDKNIPVPQIINKGELDNNSFLLLEFIENGHAYPESYRKLGKIVANMHKNINSLNLFGFSHNFNGGTIEF</sequence>
<name>YIL2_STAAU</name>
<proteinExistence type="predicted"/>
<dbReference type="EMBL" id="X75439">
    <property type="protein sequence ID" value="CAA53191.1"/>
    <property type="molecule type" value="Genomic_DNA"/>
</dbReference>
<dbReference type="PIR" id="S40262">
    <property type="entry name" value="S40262"/>
</dbReference>
<dbReference type="SMR" id="P41370"/>
<dbReference type="Gene3D" id="3.30.200.20">
    <property type="entry name" value="Phosphorylase Kinase, domain 1"/>
    <property type="match status" value="1"/>
</dbReference>
<dbReference type="InterPro" id="IPR016477">
    <property type="entry name" value="Fructo-/Ketosamine-3-kinase"/>
</dbReference>
<dbReference type="InterPro" id="IPR011009">
    <property type="entry name" value="Kinase-like_dom_sf"/>
</dbReference>
<dbReference type="PANTHER" id="PTHR12149">
    <property type="entry name" value="FRUCTOSAMINE 3 KINASE-RELATED PROTEIN"/>
    <property type="match status" value="1"/>
</dbReference>
<dbReference type="PANTHER" id="PTHR12149:SF8">
    <property type="entry name" value="PROTEIN-RIBULOSAMINE 3-KINASE"/>
    <property type="match status" value="1"/>
</dbReference>
<dbReference type="Pfam" id="PF03881">
    <property type="entry name" value="Fructosamin_kin"/>
    <property type="match status" value="1"/>
</dbReference>
<dbReference type="SUPFAM" id="SSF56112">
    <property type="entry name" value="Protein kinase-like (PK-like)"/>
    <property type="match status" value="1"/>
</dbReference>
<accession>P41370</accession>
<organism>
    <name type="scientific">Staphylococcus aureus</name>
    <dbReference type="NCBI Taxonomy" id="1280"/>
    <lineage>
        <taxon>Bacteria</taxon>
        <taxon>Bacillati</taxon>
        <taxon>Bacillota</taxon>
        <taxon>Bacilli</taxon>
        <taxon>Bacillales</taxon>
        <taxon>Staphylococcaceae</taxon>
        <taxon>Staphylococcus</taxon>
    </lineage>
</organism>
<geneLocation type="plasmid">
    <name>pOX301</name>
</geneLocation>
<protein>
    <recommendedName>
        <fullName>Uncharacterized protein in ileS 3'region</fullName>
    </recommendedName>
    <alternativeName>
        <fullName>ORF C</fullName>
    </alternativeName>
</protein>
<keyword id="KW-0614">Plasmid</keyword>
<feature type="chain" id="PRO_0000066268" description="Uncharacterized protein in ileS 3'region">
    <location>
        <begin position="1"/>
        <end position="131" status="greater than"/>
    </location>
</feature>
<feature type="non-terminal residue">
    <location>
        <position position="131"/>
    </location>
</feature>
<reference key="1">
    <citation type="journal article" date="1994" name="Antimicrob. Agents Chemother.">
        <title>Molecular characterization of the gene encoding high-level mupirocin resistance in Staphylococcus aureus J2870.</title>
        <authorList>
            <person name="Hodgson J.E."/>
            <person name="Curnock S.P."/>
            <person name="Dyke K.G.H."/>
            <person name="Morris R."/>
            <person name="Sylvester D.R."/>
            <person name="Gross M.S."/>
        </authorList>
    </citation>
    <scope>NUCLEOTIDE SEQUENCE [GENOMIC DNA]</scope>
    <source>
        <strain>J2870</strain>
        <plasmid>pOX301</plasmid>
    </source>
</reference>